<organism>
    <name type="scientific">Homo sapiens</name>
    <name type="common">Human</name>
    <dbReference type="NCBI Taxonomy" id="9606"/>
    <lineage>
        <taxon>Eukaryota</taxon>
        <taxon>Metazoa</taxon>
        <taxon>Chordata</taxon>
        <taxon>Craniata</taxon>
        <taxon>Vertebrata</taxon>
        <taxon>Euteleostomi</taxon>
        <taxon>Mammalia</taxon>
        <taxon>Eutheria</taxon>
        <taxon>Euarchontoglires</taxon>
        <taxon>Primates</taxon>
        <taxon>Haplorrhini</taxon>
        <taxon>Catarrhini</taxon>
        <taxon>Hominidae</taxon>
        <taxon>Homo</taxon>
    </lineage>
</organism>
<dbReference type="EMBL" id="AY033594">
    <property type="protein sequence ID" value="AAK52311.1"/>
    <property type="molecule type" value="mRNA"/>
</dbReference>
<dbReference type="EMBL" id="AY033595">
    <property type="protein sequence ID" value="AAK52312.1"/>
    <property type="molecule type" value="mRNA"/>
</dbReference>
<dbReference type="EMBL" id="AL390715">
    <property type="status" value="NOT_ANNOTATED_CDS"/>
    <property type="molecule type" value="Genomic_DNA"/>
</dbReference>
<dbReference type="EMBL" id="AL834250">
    <property type="protein sequence ID" value="CAD38926.2"/>
    <property type="molecule type" value="mRNA"/>
</dbReference>
<dbReference type="EMBL" id="AL137485">
    <property type="protein sequence ID" value="CAB70766.1"/>
    <property type="molecule type" value="mRNA"/>
</dbReference>
<dbReference type="EMBL" id="CH471072">
    <property type="protein sequence ID" value="EAW85980.1"/>
    <property type="molecule type" value="Genomic_DNA"/>
</dbReference>
<dbReference type="EMBL" id="CH471072">
    <property type="protein sequence ID" value="EAW85983.1"/>
    <property type="molecule type" value="Genomic_DNA"/>
</dbReference>
<dbReference type="EMBL" id="CH471072">
    <property type="protein sequence ID" value="EAW85985.1"/>
    <property type="molecule type" value="Genomic_DNA"/>
</dbReference>
<dbReference type="EMBL" id="BC051811">
    <property type="protein sequence ID" value="AAH51811.1"/>
    <property type="molecule type" value="mRNA"/>
</dbReference>
<dbReference type="EMBL" id="BC094719">
    <property type="protein sequence ID" value="AAH94719.1"/>
    <property type="molecule type" value="mRNA"/>
</dbReference>
<dbReference type="CCDS" id="CCDS59214.1">
    <molecule id="Q8IWW6-3"/>
</dbReference>
<dbReference type="CCDS" id="CCDS59215.1">
    <molecule id="Q8IWW6-2"/>
</dbReference>
<dbReference type="CCDS" id="CCDS59216.1">
    <molecule id="Q8IWW6-4"/>
</dbReference>
<dbReference type="CCDS" id="CCDS7170.1">
    <molecule id="Q8IWW6-1"/>
</dbReference>
<dbReference type="PIR" id="T46471">
    <property type="entry name" value="T46471"/>
</dbReference>
<dbReference type="RefSeq" id="NP_001257624.1">
    <molecule id="Q8IWW6-4"/>
    <property type="nucleotide sequence ID" value="NM_001270695.1"/>
</dbReference>
<dbReference type="RefSeq" id="NP_001257625.1">
    <molecule id="Q8IWW6-2"/>
    <property type="nucleotide sequence ID" value="NM_001270696.2"/>
</dbReference>
<dbReference type="RefSeq" id="NP_001257626.1">
    <property type="nucleotide sequence ID" value="NM_001270697.1"/>
</dbReference>
<dbReference type="RefSeq" id="NP_001257627.1">
    <property type="nucleotide sequence ID" value="NM_001270698.1"/>
</dbReference>
<dbReference type="RefSeq" id="NP_001257628.1">
    <molecule id="Q8IWW6-3"/>
    <property type="nucleotide sequence ID" value="NM_001270699.1"/>
</dbReference>
<dbReference type="RefSeq" id="NP_060757.4">
    <molecule id="Q8IWW6-1"/>
    <property type="nucleotide sequence ID" value="NM_018287.6"/>
</dbReference>
<dbReference type="RefSeq" id="XP_005252701.1">
    <molecule id="Q8IWW6-3"/>
    <property type="nucleotide sequence ID" value="XM_005252644.3"/>
</dbReference>
<dbReference type="RefSeq" id="XP_054223171.1">
    <molecule id="Q8IWW6-3"/>
    <property type="nucleotide sequence ID" value="XM_054367196.1"/>
</dbReference>
<dbReference type="SMR" id="Q8IWW6"/>
<dbReference type="BioGRID" id="125122">
    <property type="interactions" value="73"/>
</dbReference>
<dbReference type="FunCoup" id="Q8IWW6">
    <property type="interactions" value="1557"/>
</dbReference>
<dbReference type="IntAct" id="Q8IWW6">
    <property type="interactions" value="44"/>
</dbReference>
<dbReference type="STRING" id="9606.ENSP00000345808"/>
<dbReference type="GlyGen" id="Q8IWW6">
    <property type="glycosylation" value="2 sites, 1 N-linked glycan (1 site), 1 O-linked glycan (1 site)"/>
</dbReference>
<dbReference type="iPTMnet" id="Q8IWW6"/>
<dbReference type="MetOSite" id="Q8IWW6"/>
<dbReference type="PhosphoSitePlus" id="Q8IWW6"/>
<dbReference type="BioMuta" id="ARHGAP12"/>
<dbReference type="DMDM" id="47117238"/>
<dbReference type="jPOST" id="Q8IWW6"/>
<dbReference type="MassIVE" id="Q8IWW6"/>
<dbReference type="PaxDb" id="9606-ENSP00000345808"/>
<dbReference type="PeptideAtlas" id="Q8IWW6"/>
<dbReference type="ProteomicsDB" id="62408"/>
<dbReference type="ProteomicsDB" id="70913">
    <molecule id="Q8IWW6-1"/>
</dbReference>
<dbReference type="ProteomicsDB" id="70914">
    <molecule id="Q8IWW6-2"/>
</dbReference>
<dbReference type="ProteomicsDB" id="70915">
    <molecule id="Q8IWW6-3"/>
</dbReference>
<dbReference type="Pumba" id="Q8IWW6"/>
<dbReference type="ABCD" id="Q8IWW6">
    <property type="antibodies" value="3 sequenced antibodies"/>
</dbReference>
<dbReference type="Antibodypedia" id="26325">
    <property type="antibodies" value="63 antibodies from 19 providers"/>
</dbReference>
<dbReference type="DNASU" id="94134"/>
<dbReference type="Ensembl" id="ENST00000311380.8">
    <molecule id="Q8IWW6-3"/>
    <property type="protein sequence ID" value="ENSP00000310984.4"/>
    <property type="gene ID" value="ENSG00000165322.18"/>
</dbReference>
<dbReference type="Ensembl" id="ENST00000344936.7">
    <molecule id="Q8IWW6-1"/>
    <property type="protein sequence ID" value="ENSP00000345808.2"/>
    <property type="gene ID" value="ENSG00000165322.18"/>
</dbReference>
<dbReference type="Ensembl" id="ENST00000375250.9">
    <molecule id="Q8IWW6-2"/>
    <property type="protein sequence ID" value="ENSP00000364399.5"/>
    <property type="gene ID" value="ENSG00000165322.18"/>
</dbReference>
<dbReference type="Ensembl" id="ENST00000396144.8">
    <molecule id="Q8IWW6-4"/>
    <property type="protein sequence ID" value="ENSP00000379448.4"/>
    <property type="gene ID" value="ENSG00000165322.18"/>
</dbReference>
<dbReference type="GeneID" id="94134"/>
<dbReference type="KEGG" id="hsa:94134"/>
<dbReference type="MANE-Select" id="ENST00000344936.7">
    <property type="protein sequence ID" value="ENSP00000345808.2"/>
    <property type="RefSeq nucleotide sequence ID" value="NM_018287.7"/>
    <property type="RefSeq protein sequence ID" value="NP_060757.4"/>
</dbReference>
<dbReference type="UCSC" id="uc001ivy.3">
    <molecule id="Q8IWW6-1"/>
    <property type="organism name" value="human"/>
</dbReference>
<dbReference type="AGR" id="HGNC:16348"/>
<dbReference type="CTD" id="94134"/>
<dbReference type="DisGeNET" id="94134"/>
<dbReference type="GeneCards" id="ARHGAP12"/>
<dbReference type="HGNC" id="HGNC:16348">
    <property type="gene designation" value="ARHGAP12"/>
</dbReference>
<dbReference type="HPA" id="ENSG00000165322">
    <property type="expression patterns" value="Low tissue specificity"/>
</dbReference>
<dbReference type="MIM" id="610577">
    <property type="type" value="gene"/>
</dbReference>
<dbReference type="neXtProt" id="NX_Q8IWW6"/>
<dbReference type="OpenTargets" id="ENSG00000165322"/>
<dbReference type="PharmGKB" id="PA24957"/>
<dbReference type="VEuPathDB" id="HostDB:ENSG00000165322"/>
<dbReference type="eggNOG" id="KOG1450">
    <property type="taxonomic scope" value="Eukaryota"/>
</dbReference>
<dbReference type="GeneTree" id="ENSGT00950000182860"/>
<dbReference type="HOGENOM" id="CLU_015883_6_1_1"/>
<dbReference type="InParanoid" id="Q8IWW6"/>
<dbReference type="OMA" id="PECHYAT"/>
<dbReference type="OrthoDB" id="79452at2759"/>
<dbReference type="PAN-GO" id="Q8IWW6">
    <property type="GO annotations" value="2 GO annotations based on evolutionary models"/>
</dbReference>
<dbReference type="PhylomeDB" id="Q8IWW6"/>
<dbReference type="TreeFam" id="TF329345"/>
<dbReference type="PathwayCommons" id="Q8IWW6"/>
<dbReference type="Reactome" id="R-HSA-9013149">
    <property type="pathway name" value="RAC1 GTPase cycle"/>
</dbReference>
<dbReference type="Reactome" id="R-HSA-9013405">
    <property type="pathway name" value="RHOD GTPase cycle"/>
</dbReference>
<dbReference type="Reactome" id="R-HSA-9013424">
    <property type="pathway name" value="RHOV GTPase cycle"/>
</dbReference>
<dbReference type="Reactome" id="R-HSA-9035034">
    <property type="pathway name" value="RHOF GTPase cycle"/>
</dbReference>
<dbReference type="SignaLink" id="Q8IWW6"/>
<dbReference type="SIGNOR" id="Q8IWW6"/>
<dbReference type="BioGRID-ORCS" id="94134">
    <property type="hits" value="21 hits in 1163 CRISPR screens"/>
</dbReference>
<dbReference type="ChiTaRS" id="ARHGAP12">
    <property type="organism name" value="human"/>
</dbReference>
<dbReference type="GenomeRNAi" id="94134"/>
<dbReference type="Pharos" id="Q8IWW6">
    <property type="development level" value="Tbio"/>
</dbReference>
<dbReference type="PRO" id="PR:Q8IWW6"/>
<dbReference type="Proteomes" id="UP000005640">
    <property type="component" value="Chromosome 10"/>
</dbReference>
<dbReference type="RNAct" id="Q8IWW6">
    <property type="molecule type" value="protein"/>
</dbReference>
<dbReference type="Bgee" id="ENSG00000165322">
    <property type="expression patterns" value="Expressed in buccal mucosa cell and 206 other cell types or tissues"/>
</dbReference>
<dbReference type="ExpressionAtlas" id="Q8IWW6">
    <property type="expression patterns" value="baseline and differential"/>
</dbReference>
<dbReference type="GO" id="GO:0005737">
    <property type="term" value="C:cytoplasm"/>
    <property type="evidence" value="ECO:0000318"/>
    <property type="project" value="GO_Central"/>
</dbReference>
<dbReference type="GO" id="GO:0098978">
    <property type="term" value="C:glutamatergic synapse"/>
    <property type="evidence" value="ECO:0007669"/>
    <property type="project" value="Ensembl"/>
</dbReference>
<dbReference type="GO" id="GO:0001891">
    <property type="term" value="C:phagocytic cup"/>
    <property type="evidence" value="ECO:0000314"/>
    <property type="project" value="UniProtKB"/>
</dbReference>
<dbReference type="GO" id="GO:0005886">
    <property type="term" value="C:plasma membrane"/>
    <property type="evidence" value="ECO:0000318"/>
    <property type="project" value="GO_Central"/>
</dbReference>
<dbReference type="GO" id="GO:0098794">
    <property type="term" value="C:postsynapse"/>
    <property type="evidence" value="ECO:0007669"/>
    <property type="project" value="Ensembl"/>
</dbReference>
<dbReference type="GO" id="GO:0005096">
    <property type="term" value="F:GTPase activator activity"/>
    <property type="evidence" value="ECO:0000318"/>
    <property type="project" value="GO_Central"/>
</dbReference>
<dbReference type="GO" id="GO:0007015">
    <property type="term" value="P:actin filament organization"/>
    <property type="evidence" value="ECO:0000315"/>
    <property type="project" value="UniProtKB"/>
</dbReference>
<dbReference type="GO" id="GO:0002011">
    <property type="term" value="P:morphogenesis of an epithelial sheet"/>
    <property type="evidence" value="ECO:0000315"/>
    <property type="project" value="UniProtKB"/>
</dbReference>
<dbReference type="GO" id="GO:0051058">
    <property type="term" value="P:negative regulation of small GTPase mediated signal transduction"/>
    <property type="evidence" value="ECO:0000315"/>
    <property type="project" value="UniProtKB"/>
</dbReference>
<dbReference type="GO" id="GO:0006911">
    <property type="term" value="P:phagocytosis, engulfment"/>
    <property type="evidence" value="ECO:0000315"/>
    <property type="project" value="UniProtKB"/>
</dbReference>
<dbReference type="GO" id="GO:0150052">
    <property type="term" value="P:regulation of postsynapse assembly"/>
    <property type="evidence" value="ECO:0007669"/>
    <property type="project" value="Ensembl"/>
</dbReference>
<dbReference type="GO" id="GO:0007264">
    <property type="term" value="P:small GTPase-mediated signal transduction"/>
    <property type="evidence" value="ECO:0000318"/>
    <property type="project" value="GO_Central"/>
</dbReference>
<dbReference type="CDD" id="cd13233">
    <property type="entry name" value="PH_ARHGAP9-like"/>
    <property type="match status" value="1"/>
</dbReference>
<dbReference type="CDD" id="cd04403">
    <property type="entry name" value="RhoGAP_ARHGAP27_15_12_9"/>
    <property type="match status" value="1"/>
</dbReference>
<dbReference type="CDD" id="cd12070">
    <property type="entry name" value="SH3_ARHGAP12"/>
    <property type="match status" value="1"/>
</dbReference>
<dbReference type="CDD" id="cd00201">
    <property type="entry name" value="WW"/>
    <property type="match status" value="1"/>
</dbReference>
<dbReference type="FunFam" id="1.10.555.10:FF:000003">
    <property type="entry name" value="Putative rho GTPase-activating protein 12"/>
    <property type="match status" value="1"/>
</dbReference>
<dbReference type="FunFam" id="2.20.70.10:FF:000024">
    <property type="entry name" value="Rho GTPase activating protein 12"/>
    <property type="match status" value="1"/>
</dbReference>
<dbReference type="FunFam" id="2.30.29.30:FF:000100">
    <property type="entry name" value="Rho GTPase activating protein 12"/>
    <property type="match status" value="1"/>
</dbReference>
<dbReference type="FunFam" id="2.30.30.40:FF:000056">
    <property type="entry name" value="rho GTPase-activating protein 12 isoform X1"/>
    <property type="match status" value="1"/>
</dbReference>
<dbReference type="Gene3D" id="2.20.70.10">
    <property type="match status" value="1"/>
</dbReference>
<dbReference type="Gene3D" id="2.30.29.30">
    <property type="entry name" value="Pleckstrin-homology domain (PH domain)/Phosphotyrosine-binding domain (PTB)"/>
    <property type="match status" value="1"/>
</dbReference>
<dbReference type="Gene3D" id="1.10.555.10">
    <property type="entry name" value="Rho GTPase activation protein"/>
    <property type="match status" value="1"/>
</dbReference>
<dbReference type="Gene3D" id="2.30.30.40">
    <property type="entry name" value="SH3 Domains"/>
    <property type="match status" value="1"/>
</dbReference>
<dbReference type="InterPro" id="IPR035491">
    <property type="entry name" value="ARHGAP12_SH3"/>
</dbReference>
<dbReference type="InterPro" id="IPR011993">
    <property type="entry name" value="PH-like_dom_sf"/>
</dbReference>
<dbReference type="InterPro" id="IPR001849">
    <property type="entry name" value="PH_domain"/>
</dbReference>
<dbReference type="InterPro" id="IPR050729">
    <property type="entry name" value="Rho-GAP"/>
</dbReference>
<dbReference type="InterPro" id="IPR008936">
    <property type="entry name" value="Rho_GTPase_activation_prot"/>
</dbReference>
<dbReference type="InterPro" id="IPR000198">
    <property type="entry name" value="RhoGAP_dom"/>
</dbReference>
<dbReference type="InterPro" id="IPR036028">
    <property type="entry name" value="SH3-like_dom_sf"/>
</dbReference>
<dbReference type="InterPro" id="IPR001452">
    <property type="entry name" value="SH3_domain"/>
</dbReference>
<dbReference type="InterPro" id="IPR001202">
    <property type="entry name" value="WW_dom"/>
</dbReference>
<dbReference type="InterPro" id="IPR036020">
    <property type="entry name" value="WW_dom_sf"/>
</dbReference>
<dbReference type="PANTHER" id="PTHR23176:SF107">
    <property type="entry name" value="RHO GTPASE-ACTIVATING PROTEIN 12"/>
    <property type="match status" value="1"/>
</dbReference>
<dbReference type="PANTHER" id="PTHR23176">
    <property type="entry name" value="RHO/RAC/CDC GTPASE-ACTIVATING PROTEIN"/>
    <property type="match status" value="1"/>
</dbReference>
<dbReference type="Pfam" id="PF00169">
    <property type="entry name" value="PH"/>
    <property type="match status" value="1"/>
</dbReference>
<dbReference type="Pfam" id="PF00620">
    <property type="entry name" value="RhoGAP"/>
    <property type="match status" value="1"/>
</dbReference>
<dbReference type="Pfam" id="PF16618">
    <property type="entry name" value="SH3-WW_linker"/>
    <property type="match status" value="1"/>
</dbReference>
<dbReference type="Pfam" id="PF00018">
    <property type="entry name" value="SH3_1"/>
    <property type="match status" value="1"/>
</dbReference>
<dbReference type="Pfam" id="PF00397">
    <property type="entry name" value="WW"/>
    <property type="match status" value="1"/>
</dbReference>
<dbReference type="SMART" id="SM00233">
    <property type="entry name" value="PH"/>
    <property type="match status" value="1"/>
</dbReference>
<dbReference type="SMART" id="SM00324">
    <property type="entry name" value="RhoGAP"/>
    <property type="match status" value="1"/>
</dbReference>
<dbReference type="SMART" id="SM00326">
    <property type="entry name" value="SH3"/>
    <property type="match status" value="1"/>
</dbReference>
<dbReference type="SMART" id="SM00456">
    <property type="entry name" value="WW"/>
    <property type="match status" value="2"/>
</dbReference>
<dbReference type="SUPFAM" id="SSF48350">
    <property type="entry name" value="GTPase activation domain, GAP"/>
    <property type="match status" value="1"/>
</dbReference>
<dbReference type="SUPFAM" id="SSF50729">
    <property type="entry name" value="PH domain-like"/>
    <property type="match status" value="1"/>
</dbReference>
<dbReference type="SUPFAM" id="SSF50044">
    <property type="entry name" value="SH3-domain"/>
    <property type="match status" value="1"/>
</dbReference>
<dbReference type="SUPFAM" id="SSF51045">
    <property type="entry name" value="WW domain"/>
    <property type="match status" value="2"/>
</dbReference>
<dbReference type="PROSITE" id="PS50003">
    <property type="entry name" value="PH_DOMAIN"/>
    <property type="match status" value="1"/>
</dbReference>
<dbReference type="PROSITE" id="PS50238">
    <property type="entry name" value="RHOGAP"/>
    <property type="match status" value="1"/>
</dbReference>
<dbReference type="PROSITE" id="PS50002">
    <property type="entry name" value="SH3"/>
    <property type="match status" value="1"/>
</dbReference>
<dbReference type="PROSITE" id="PS50020">
    <property type="entry name" value="WW_DOMAIN_2"/>
    <property type="match status" value="2"/>
</dbReference>
<proteinExistence type="evidence at protein level"/>
<evidence type="ECO:0000250" key="1"/>
<evidence type="ECO:0000255" key="2">
    <source>
        <dbReference type="PROSITE-ProRule" id="PRU00145"/>
    </source>
</evidence>
<evidence type="ECO:0000255" key="3">
    <source>
        <dbReference type="PROSITE-ProRule" id="PRU00172"/>
    </source>
</evidence>
<evidence type="ECO:0000255" key="4">
    <source>
        <dbReference type="PROSITE-ProRule" id="PRU00192"/>
    </source>
</evidence>
<evidence type="ECO:0000255" key="5">
    <source>
        <dbReference type="PROSITE-ProRule" id="PRU00224"/>
    </source>
</evidence>
<evidence type="ECO:0000256" key="6">
    <source>
        <dbReference type="SAM" id="MobiDB-lite"/>
    </source>
</evidence>
<evidence type="ECO:0000303" key="7">
    <source>
    </source>
</evidence>
<evidence type="ECO:0000303" key="8">
    <source>
    </source>
</evidence>
<evidence type="ECO:0000303" key="9">
    <source ref="1"/>
</evidence>
<evidence type="ECO:0000305" key="10"/>
<evidence type="ECO:0007744" key="11">
    <source>
    </source>
</evidence>
<evidence type="ECO:0007744" key="12">
    <source>
    </source>
</evidence>
<evidence type="ECO:0007744" key="13">
    <source>
    </source>
</evidence>
<evidence type="ECO:0007744" key="14">
    <source>
    </source>
</evidence>
<evidence type="ECO:0007744" key="15">
    <source>
    </source>
</evidence>
<evidence type="ECO:0007744" key="16">
    <source>
    </source>
</evidence>
<evidence type="ECO:0007744" key="17">
    <source>
    </source>
</evidence>
<comment type="function">
    <text evidence="1">GTPase activator for the Rho-type GTPases by converting them to an inactive GDP-bound state.</text>
</comment>
<comment type="interaction">
    <interactant intactId="EBI-11959591">
        <id>Q8IWW6-4</id>
    </interactant>
    <interactant intactId="EBI-11959011">
        <id>Q9UPX8-4</id>
        <label>SHANK2</label>
    </interactant>
    <organismsDiffer>false</organismsDiffer>
    <experiments>3</experiments>
</comment>
<comment type="interaction">
    <interactant intactId="EBI-11959591">
        <id>Q8IWW6-4</id>
    </interactant>
    <interactant intactId="EBI-6550597">
        <id>Q15642-2</id>
        <label>TRIP10</label>
    </interactant>
    <organismsDiffer>false</organismsDiffer>
    <experiments>3</experiments>
</comment>
<comment type="interaction">
    <interactant intactId="EBI-11959591">
        <id>Q8IWW6-4</id>
    </interactant>
    <interactant intactId="EBI-957615">
        <id>O00401</id>
        <label>WASL</label>
    </interactant>
    <organismsDiffer>false</organismsDiffer>
    <experiments>3</experiments>
</comment>
<comment type="alternative products">
    <event type="alternative splicing"/>
    <isoform>
        <id>Q8IWW6-1</id>
        <name>1</name>
        <name>ARHGAP12b</name>
        <sequence type="displayed"/>
    </isoform>
    <isoform>
        <id>Q8IWW6-2</id>
        <name>2</name>
        <name>ARHGAP12a</name>
        <sequence type="described" ref="VSP_010327"/>
    </isoform>
    <isoform>
        <id>Q8IWW6-3</id>
        <name>3</name>
        <sequence type="described" ref="VSP_010326 VSP_010328"/>
    </isoform>
    <isoform>
        <id>Q8IWW6-4</id>
        <name>4</name>
        <sequence type="described" ref="VSP_010328"/>
    </isoform>
</comment>
<keyword id="KW-0025">Alternative splicing</keyword>
<keyword id="KW-0343">GTPase activation</keyword>
<keyword id="KW-0597">Phosphoprotein</keyword>
<keyword id="KW-1267">Proteomics identification</keyword>
<keyword id="KW-1185">Reference proteome</keyword>
<keyword id="KW-0677">Repeat</keyword>
<keyword id="KW-0728">SH3 domain</keyword>
<protein>
    <recommendedName>
        <fullName>Rho GTPase-activating protein 12</fullName>
    </recommendedName>
    <alternativeName>
        <fullName>Rho-type GTPase-activating protein 12</fullName>
    </alternativeName>
</protein>
<accession>Q8IWW6</accession>
<accession>B1ANY0</accession>
<accession>B1ANY1</accession>
<accession>B1ANY2</accession>
<accession>Q504X1</accession>
<accession>Q86UB3</accession>
<accession>Q8IWW7</accession>
<accession>Q8N3L1</accession>
<accession>Q9NT76</accession>
<gene>
    <name type="primary">ARHGAP12</name>
</gene>
<reference key="1">
    <citation type="submission" date="2001-04" db="EMBL/GenBank/DDBJ databases">
        <title>Cloning and characterization of a novel human gene.</title>
        <authorList>
            <person name="Mao Y."/>
            <person name="Xie Y."/>
            <person name="Zhang Z."/>
        </authorList>
    </citation>
    <scope>NUCLEOTIDE SEQUENCE [MRNA] (ISOFORMS 1 AND 2)</scope>
</reference>
<reference key="2">
    <citation type="journal article" date="2004" name="Nature">
        <title>The DNA sequence and comparative analysis of human chromosome 10.</title>
        <authorList>
            <person name="Deloukas P."/>
            <person name="Earthrowl M.E."/>
            <person name="Grafham D.V."/>
            <person name="Rubenfield M."/>
            <person name="French L."/>
            <person name="Steward C.A."/>
            <person name="Sims S.K."/>
            <person name="Jones M.C."/>
            <person name="Searle S."/>
            <person name="Scott C."/>
            <person name="Howe K."/>
            <person name="Hunt S.E."/>
            <person name="Andrews T.D."/>
            <person name="Gilbert J.G.R."/>
            <person name="Swarbreck D."/>
            <person name="Ashurst J.L."/>
            <person name="Taylor A."/>
            <person name="Battles J."/>
            <person name="Bird C.P."/>
            <person name="Ainscough R."/>
            <person name="Almeida J.P."/>
            <person name="Ashwell R.I.S."/>
            <person name="Ambrose K.D."/>
            <person name="Babbage A.K."/>
            <person name="Bagguley C.L."/>
            <person name="Bailey J."/>
            <person name="Banerjee R."/>
            <person name="Bates K."/>
            <person name="Beasley H."/>
            <person name="Bray-Allen S."/>
            <person name="Brown A.J."/>
            <person name="Brown J.Y."/>
            <person name="Burford D.C."/>
            <person name="Burrill W."/>
            <person name="Burton J."/>
            <person name="Cahill P."/>
            <person name="Camire D."/>
            <person name="Carter N.P."/>
            <person name="Chapman J.C."/>
            <person name="Clark S.Y."/>
            <person name="Clarke G."/>
            <person name="Clee C.M."/>
            <person name="Clegg S."/>
            <person name="Corby N."/>
            <person name="Coulson A."/>
            <person name="Dhami P."/>
            <person name="Dutta I."/>
            <person name="Dunn M."/>
            <person name="Faulkner L."/>
            <person name="Frankish A."/>
            <person name="Frankland J.A."/>
            <person name="Garner P."/>
            <person name="Garnett J."/>
            <person name="Gribble S."/>
            <person name="Griffiths C."/>
            <person name="Grocock R."/>
            <person name="Gustafson E."/>
            <person name="Hammond S."/>
            <person name="Harley J.L."/>
            <person name="Hart E."/>
            <person name="Heath P.D."/>
            <person name="Ho T.P."/>
            <person name="Hopkins B."/>
            <person name="Horne J."/>
            <person name="Howden P.J."/>
            <person name="Huckle E."/>
            <person name="Hynds C."/>
            <person name="Johnson C."/>
            <person name="Johnson D."/>
            <person name="Kana A."/>
            <person name="Kay M."/>
            <person name="Kimberley A.M."/>
            <person name="Kershaw J.K."/>
            <person name="Kokkinaki M."/>
            <person name="Laird G.K."/>
            <person name="Lawlor S."/>
            <person name="Lee H.M."/>
            <person name="Leongamornlert D.A."/>
            <person name="Laird G."/>
            <person name="Lloyd C."/>
            <person name="Lloyd D.M."/>
            <person name="Loveland J."/>
            <person name="Lovell J."/>
            <person name="McLaren S."/>
            <person name="McLay K.E."/>
            <person name="McMurray A."/>
            <person name="Mashreghi-Mohammadi M."/>
            <person name="Matthews L."/>
            <person name="Milne S."/>
            <person name="Nickerson T."/>
            <person name="Nguyen M."/>
            <person name="Overton-Larty E."/>
            <person name="Palmer S.A."/>
            <person name="Pearce A.V."/>
            <person name="Peck A.I."/>
            <person name="Pelan S."/>
            <person name="Phillimore B."/>
            <person name="Porter K."/>
            <person name="Rice C.M."/>
            <person name="Rogosin A."/>
            <person name="Ross M.T."/>
            <person name="Sarafidou T."/>
            <person name="Sehra H.K."/>
            <person name="Shownkeen R."/>
            <person name="Skuce C.D."/>
            <person name="Smith M."/>
            <person name="Standring L."/>
            <person name="Sycamore N."/>
            <person name="Tester J."/>
            <person name="Thorpe A."/>
            <person name="Torcasso W."/>
            <person name="Tracey A."/>
            <person name="Tromans A."/>
            <person name="Tsolas J."/>
            <person name="Wall M."/>
            <person name="Walsh J."/>
            <person name="Wang H."/>
            <person name="Weinstock K."/>
            <person name="West A.P."/>
            <person name="Willey D.L."/>
            <person name="Whitehead S.L."/>
            <person name="Wilming L."/>
            <person name="Wray P.W."/>
            <person name="Young L."/>
            <person name="Chen Y."/>
            <person name="Lovering R.C."/>
            <person name="Moschonas N.K."/>
            <person name="Siebert R."/>
            <person name="Fechtel K."/>
            <person name="Bentley D."/>
            <person name="Durbin R.M."/>
            <person name="Hubbard T."/>
            <person name="Doucette-Stamm L."/>
            <person name="Beck S."/>
            <person name="Smith D.R."/>
            <person name="Rogers J."/>
        </authorList>
    </citation>
    <scope>NUCLEOTIDE SEQUENCE [LARGE SCALE GENOMIC DNA]</scope>
</reference>
<reference key="3">
    <citation type="submission" date="2005-09" db="EMBL/GenBank/DDBJ databases">
        <authorList>
            <person name="Mural R.J."/>
            <person name="Istrail S."/>
            <person name="Sutton G.G."/>
            <person name="Florea L."/>
            <person name="Halpern A.L."/>
            <person name="Mobarry C.M."/>
            <person name="Lippert R."/>
            <person name="Walenz B."/>
            <person name="Shatkay H."/>
            <person name="Dew I."/>
            <person name="Miller J.R."/>
            <person name="Flanigan M.J."/>
            <person name="Edwards N.J."/>
            <person name="Bolanos R."/>
            <person name="Fasulo D."/>
            <person name="Halldorsson B.V."/>
            <person name="Hannenhalli S."/>
            <person name="Turner R."/>
            <person name="Yooseph S."/>
            <person name="Lu F."/>
            <person name="Nusskern D.R."/>
            <person name="Shue B.C."/>
            <person name="Zheng X.H."/>
            <person name="Zhong F."/>
            <person name="Delcher A.L."/>
            <person name="Huson D.H."/>
            <person name="Kravitz S.A."/>
            <person name="Mouchard L."/>
            <person name="Reinert K."/>
            <person name="Remington K.A."/>
            <person name="Clark A.G."/>
            <person name="Waterman M.S."/>
            <person name="Eichler E.E."/>
            <person name="Adams M.D."/>
            <person name="Hunkapiller M.W."/>
            <person name="Myers E.W."/>
            <person name="Venter J.C."/>
        </authorList>
    </citation>
    <scope>NUCLEOTIDE SEQUENCE [LARGE SCALE GENOMIC DNA]</scope>
</reference>
<reference key="4">
    <citation type="journal article" date="2007" name="BMC Genomics">
        <title>The full-ORF clone resource of the German cDNA consortium.</title>
        <authorList>
            <person name="Bechtel S."/>
            <person name="Rosenfelder H."/>
            <person name="Duda A."/>
            <person name="Schmidt C.P."/>
            <person name="Ernst U."/>
            <person name="Wellenreuther R."/>
            <person name="Mehrle A."/>
            <person name="Schuster C."/>
            <person name="Bahr A."/>
            <person name="Bloecker H."/>
            <person name="Heubner D."/>
            <person name="Hoerlein A."/>
            <person name="Michel G."/>
            <person name="Wedler H."/>
            <person name="Koehrer K."/>
            <person name="Ottenwaelder B."/>
            <person name="Poustka A."/>
            <person name="Wiemann S."/>
            <person name="Schupp I."/>
        </authorList>
    </citation>
    <scope>NUCLEOTIDE SEQUENCE [LARGE SCALE MRNA] OF 3-846 (ISOFORM 3)</scope>
    <source>
        <tissue>Testis</tissue>
    </source>
</reference>
<reference key="5">
    <citation type="journal article" date="2004" name="Genome Res.">
        <title>The status, quality, and expansion of the NIH full-length cDNA project: the Mammalian Gene Collection (MGC).</title>
        <authorList>
            <consortium name="The MGC Project Team"/>
        </authorList>
    </citation>
    <scope>NUCLEOTIDE SEQUENCE [LARGE SCALE MRNA] (ISOFORM 4)</scope>
    <source>
        <tissue>Placenta</tissue>
        <tissue>Uterus</tissue>
    </source>
</reference>
<reference key="6">
    <citation type="journal article" date="2004" name="Anal. Chem.">
        <title>Robust phosphoproteomic profiling of tyrosine phosphorylation sites from human T cells using immobilized metal affinity chromatography and tandem mass spectrometry.</title>
        <authorList>
            <person name="Brill L.M."/>
            <person name="Salomon A.R."/>
            <person name="Ficarro S.B."/>
            <person name="Mukherji M."/>
            <person name="Stettler-Gill M."/>
            <person name="Peters E.C."/>
        </authorList>
    </citation>
    <scope>PHOSPHORYLATION [LARGE SCALE ANALYSIS] AT SER-240 AND TYR-243</scope>
    <scope>IDENTIFICATION BY MASS SPECTROMETRY [LARGE SCALE ANALYSIS]</scope>
    <source>
        <tissue>Leukemic T-cell</tissue>
    </source>
</reference>
<reference key="7">
    <citation type="journal article" date="2008" name="Proc. Natl. Acad. Sci. U.S.A.">
        <title>A quantitative atlas of mitotic phosphorylation.</title>
        <authorList>
            <person name="Dephoure N."/>
            <person name="Zhou C."/>
            <person name="Villen J."/>
            <person name="Beausoleil S.A."/>
            <person name="Bakalarski C.E."/>
            <person name="Elledge S.J."/>
            <person name="Gygi S.P."/>
        </authorList>
    </citation>
    <scope>PHOSPHORYLATION [LARGE SCALE ANALYSIS] AT SER-201; SER-213; SER-215; SER-240 AND SER-592</scope>
    <scope>IDENTIFICATION BY MASS SPECTROMETRY [LARGE SCALE ANALYSIS]</scope>
    <source>
        <tissue>Cervix carcinoma</tissue>
    </source>
</reference>
<reference key="8">
    <citation type="journal article" date="2009" name="Anal. Chem.">
        <title>Lys-N and trypsin cover complementary parts of the phosphoproteome in a refined SCX-based approach.</title>
        <authorList>
            <person name="Gauci S."/>
            <person name="Helbig A.O."/>
            <person name="Slijper M."/>
            <person name="Krijgsveld J."/>
            <person name="Heck A.J."/>
            <person name="Mohammed S."/>
        </authorList>
    </citation>
    <scope>IDENTIFICATION BY MASS SPECTROMETRY [LARGE SCALE ANALYSIS]</scope>
</reference>
<reference key="9">
    <citation type="journal article" date="2009" name="Sci. Signal.">
        <title>Quantitative phosphoproteomic analysis of T cell receptor signaling reveals system-wide modulation of protein-protein interactions.</title>
        <authorList>
            <person name="Mayya V."/>
            <person name="Lundgren D.H."/>
            <person name="Hwang S.-I."/>
            <person name="Rezaul K."/>
            <person name="Wu L."/>
            <person name="Eng J.K."/>
            <person name="Rodionov V."/>
            <person name="Han D.K."/>
        </authorList>
    </citation>
    <scope>PHOSPHORYLATION [LARGE SCALE ANALYSIS] AT SER-213; SER-215; SER-240 AND TYR-243</scope>
    <scope>IDENTIFICATION BY MASS SPECTROMETRY [LARGE SCALE ANALYSIS]</scope>
    <source>
        <tissue>Leukemic T-cell</tissue>
    </source>
</reference>
<reference key="10">
    <citation type="journal article" date="2010" name="Sci. Signal.">
        <title>Quantitative phosphoproteomics reveals widespread full phosphorylation site occupancy during mitosis.</title>
        <authorList>
            <person name="Olsen J.V."/>
            <person name="Vermeulen M."/>
            <person name="Santamaria A."/>
            <person name="Kumar C."/>
            <person name="Miller M.L."/>
            <person name="Jensen L.J."/>
            <person name="Gnad F."/>
            <person name="Cox J."/>
            <person name="Jensen T.S."/>
            <person name="Nigg E.A."/>
            <person name="Brunak S."/>
            <person name="Mann M."/>
        </authorList>
    </citation>
    <scope>PHOSPHORYLATION [LARGE SCALE ANALYSIS] AT SER-165</scope>
    <scope>IDENTIFICATION BY MASS SPECTROMETRY [LARGE SCALE ANALYSIS]</scope>
    <source>
        <tissue>Cervix carcinoma</tissue>
    </source>
</reference>
<reference key="11">
    <citation type="journal article" date="2011" name="Sci. Signal.">
        <title>System-wide temporal characterization of the proteome and phosphoproteome of human embryonic stem cell differentiation.</title>
        <authorList>
            <person name="Rigbolt K.T."/>
            <person name="Prokhorova T.A."/>
            <person name="Akimov V."/>
            <person name="Henningsen J."/>
            <person name="Johansen P.T."/>
            <person name="Kratchmarova I."/>
            <person name="Kassem M."/>
            <person name="Mann M."/>
            <person name="Olsen J.V."/>
            <person name="Blagoev B."/>
        </authorList>
    </citation>
    <scope>PHOSPHORYLATION [LARGE SCALE ANALYSIS] AT SER-165</scope>
    <scope>IDENTIFICATION BY MASS SPECTROMETRY [LARGE SCALE ANALYSIS]</scope>
</reference>
<reference key="12">
    <citation type="journal article" date="2013" name="J. Proteome Res.">
        <title>Toward a comprehensive characterization of a human cancer cell phosphoproteome.</title>
        <authorList>
            <person name="Zhou H."/>
            <person name="Di Palma S."/>
            <person name="Preisinger C."/>
            <person name="Peng M."/>
            <person name="Polat A.N."/>
            <person name="Heck A.J."/>
            <person name="Mohammed S."/>
        </authorList>
    </citation>
    <scope>PHOSPHORYLATION [LARGE SCALE ANALYSIS] AT SER-176</scope>
    <scope>IDENTIFICATION BY MASS SPECTROMETRY [LARGE SCALE ANALYSIS]</scope>
    <source>
        <tissue>Cervix carcinoma</tissue>
        <tissue>Erythroleukemia</tissue>
    </source>
</reference>
<reference key="13">
    <citation type="journal article" date="2014" name="J. Proteomics">
        <title>An enzyme assisted RP-RPLC approach for in-depth analysis of human liver phosphoproteome.</title>
        <authorList>
            <person name="Bian Y."/>
            <person name="Song C."/>
            <person name="Cheng K."/>
            <person name="Dong M."/>
            <person name="Wang F."/>
            <person name="Huang J."/>
            <person name="Sun D."/>
            <person name="Wang L."/>
            <person name="Ye M."/>
            <person name="Zou H."/>
        </authorList>
    </citation>
    <scope>PHOSPHORYLATION [LARGE SCALE ANALYSIS] AT SER-176; THR-230; THR-231; SER-240 AND SER-592</scope>
    <scope>IDENTIFICATION BY MASS SPECTROMETRY [LARGE SCALE ANALYSIS]</scope>
    <source>
        <tissue>Liver</tissue>
    </source>
</reference>
<feature type="chain" id="PRO_0000056713" description="Rho GTPase-activating protein 12">
    <location>
        <begin position="1"/>
        <end position="846"/>
    </location>
</feature>
<feature type="domain" description="SH3" evidence="4">
    <location>
        <begin position="12"/>
        <end position="74"/>
    </location>
</feature>
<feature type="domain" description="WW 1" evidence="5">
    <location>
        <begin position="265"/>
        <end position="298"/>
    </location>
</feature>
<feature type="domain" description="WW 2" evidence="5">
    <location>
        <begin position="358"/>
        <end position="391"/>
    </location>
</feature>
<feature type="domain" description="PH" evidence="2">
    <location>
        <begin position="463"/>
        <end position="575"/>
    </location>
</feature>
<feature type="domain" description="Rho-GAP" evidence="3">
    <location>
        <begin position="656"/>
        <end position="844"/>
    </location>
</feature>
<feature type="region of interest" description="Disordered" evidence="6">
    <location>
        <begin position="152"/>
        <end position="241"/>
    </location>
</feature>
<feature type="region of interest" description="Disordered" evidence="6">
    <location>
        <begin position="293"/>
        <end position="316"/>
    </location>
</feature>
<feature type="region of interest" description="Disordered" evidence="6">
    <location>
        <begin position="428"/>
        <end position="466"/>
    </location>
</feature>
<feature type="region of interest" description="Disordered" evidence="6">
    <location>
        <begin position="580"/>
        <end position="629"/>
    </location>
</feature>
<feature type="compositionally biased region" description="Polar residues" evidence="6">
    <location>
        <begin position="152"/>
        <end position="175"/>
    </location>
</feature>
<feature type="compositionally biased region" description="Polar residues" evidence="6">
    <location>
        <begin position="191"/>
        <end position="200"/>
    </location>
</feature>
<feature type="compositionally biased region" description="Polar residues" evidence="6">
    <location>
        <begin position="224"/>
        <end position="234"/>
    </location>
</feature>
<feature type="compositionally biased region" description="Polar residues" evidence="6">
    <location>
        <begin position="445"/>
        <end position="461"/>
    </location>
</feature>
<feature type="compositionally biased region" description="Acidic residues" evidence="6">
    <location>
        <begin position="580"/>
        <end position="590"/>
    </location>
</feature>
<feature type="compositionally biased region" description="Basic and acidic residues" evidence="6">
    <location>
        <begin position="594"/>
        <end position="609"/>
    </location>
</feature>
<feature type="site" description="Arginine finger; crucial for GTP hydrolysis by stabilizing the transition state" evidence="3">
    <location>
        <position position="692"/>
    </location>
</feature>
<feature type="modified residue" description="Phosphoserine" evidence="14 15">
    <location>
        <position position="165"/>
    </location>
</feature>
<feature type="modified residue" description="Phosphoserine" evidence="16 17">
    <location>
        <position position="176"/>
    </location>
</feature>
<feature type="modified residue" description="Phosphoserine" evidence="12">
    <location>
        <position position="201"/>
    </location>
</feature>
<feature type="modified residue" description="Phosphoserine" evidence="12 13">
    <location>
        <position position="213"/>
    </location>
</feature>
<feature type="modified residue" description="Phosphoserine" evidence="12 13">
    <location>
        <position position="215"/>
    </location>
</feature>
<feature type="modified residue" description="Phosphothreonine" evidence="17">
    <location>
        <position position="230"/>
    </location>
</feature>
<feature type="modified residue" description="Phosphothreonine" evidence="17">
    <location>
        <position position="231"/>
    </location>
</feature>
<feature type="modified residue" description="Phosphoserine" evidence="11 12 13 17">
    <location>
        <position position="240"/>
    </location>
</feature>
<feature type="modified residue" description="Phosphotyrosine" evidence="11 13">
    <location>
        <position position="243"/>
    </location>
</feature>
<feature type="modified residue" description="Phosphoserine" evidence="12 17">
    <location>
        <position position="592"/>
    </location>
</feature>
<feature type="splice variant" id="VSP_010326" description="In isoform 3." evidence="8">
    <location>
        <begin position="317"/>
        <end position="363"/>
    </location>
</feature>
<feature type="splice variant" id="VSP_010327" description="In isoform 2." evidence="9">
    <location>
        <begin position="433"/>
        <end position="462"/>
    </location>
</feature>
<feature type="splice variant" id="VSP_010328" description="In isoform 3 and isoform 4." evidence="7 8">
    <location>
        <begin position="458"/>
        <end position="462"/>
    </location>
</feature>
<feature type="sequence variant" id="VAR_024454" description="In dbSNP:rs2808096.">
    <original>F</original>
    <variation>S</variation>
    <location>
        <position position="442"/>
    </location>
</feature>
<feature type="sequence conflict" description="In Ref. 4; CAD38926." evidence="10" ref="4">
    <original>K</original>
    <variation>R</variation>
    <location>
        <position position="70"/>
    </location>
</feature>
<feature type="sequence conflict" description="In Ref. 4; CAD38926." evidence="10" ref="4">
    <original>Q</original>
    <variation>P</variation>
    <location>
        <position position="760"/>
    </location>
</feature>
<name>RHG12_HUMAN</name>
<sequence length="846" mass="96254">MKMADRSGKIIPGQVYIEVEYDYEYEAKDRKIVIKQGERYILVKKTNDDWWQVKPDENSKAFYVPAQYVKEVTRKALMPPVKQVAGLPNNSTKIMQSLHLQRSTENVNKLPELSSFGKPSSSVQGTGLIRDANQNFGPSYNQGQTVNLSLDLTHNNGKFNNDSHSPKVSSQNRTRSFGHFPGPEFLDVEKTSFSQEQSCDSAGEGSERIHQDSESGDELSSSSTEQIRATTPPNQGRPDSPVYANLQELKISQSALPPLPGSPAIQINGEWETHKDSSGRCYYYNRGTQERTWKPPRWTRDASISKGDFQNPGDQELLSSEENYYSTSYSQSDSQCGSPPRGWSEELDERGHTLYTSDYTNEKWLKHVDDQGRQYYYSADGSRSEWELPKYNASSQQQREIIKSRSLDRRLQEPIVLTKWRHSTIVLDTNDKESPTASKPCFPENESSPSSPKHQDTASSPKDQEKYGLLNVTKIAENGKKVRKNWLSSWAVLQGSSLLFTKTQGSSTSWFGSNQSKPEFTVDLKGATIEMASKDKSSKKNVFELKTRQGTELLIQSDNDTVINDWFKVLSSTINNQAVETDEGIEEEIPDSPGIEKHDKEKEQKDPKKLRSFKVSSIDSSEQKKTKKNLKKFLTRRPTLQAVREKGYIKDQVFGSNLANLCQRENGTVPKFVKLCIEHVEEHGLDIDGIYRVSGNLAVIQKLRFAVNHDEKLDLNDSKWEDIHVITGALKMFFRELPEPLFTFNHFNDFVNAIKQEPRQRVAAVKDLIRQLPKPNQDTMQILFRHLRRVIENGEKNRMTYQSIAIVFGPTLLKPEKETGNIAVHTVYQNQIVELILLELSSIFGR</sequence>